<feature type="chain" id="PRO_1000203562" description="Phosphoserine aminotransferase">
    <location>
        <begin position="1"/>
        <end position="363"/>
    </location>
</feature>
<feature type="binding site" evidence="1">
    <location>
        <position position="42"/>
    </location>
    <ligand>
        <name>L-glutamate</name>
        <dbReference type="ChEBI" id="CHEBI:29985"/>
    </ligand>
</feature>
<feature type="binding site" evidence="1">
    <location>
        <begin position="76"/>
        <end position="77"/>
    </location>
    <ligand>
        <name>pyridoxal 5'-phosphate</name>
        <dbReference type="ChEBI" id="CHEBI:597326"/>
    </ligand>
</feature>
<feature type="binding site" evidence="1">
    <location>
        <position position="102"/>
    </location>
    <ligand>
        <name>pyridoxal 5'-phosphate</name>
        <dbReference type="ChEBI" id="CHEBI:597326"/>
    </ligand>
</feature>
<feature type="binding site" evidence="1">
    <location>
        <position position="156"/>
    </location>
    <ligand>
        <name>pyridoxal 5'-phosphate</name>
        <dbReference type="ChEBI" id="CHEBI:597326"/>
    </ligand>
</feature>
<feature type="binding site" evidence="1">
    <location>
        <position position="175"/>
    </location>
    <ligand>
        <name>pyridoxal 5'-phosphate</name>
        <dbReference type="ChEBI" id="CHEBI:597326"/>
    </ligand>
</feature>
<feature type="binding site" evidence="1">
    <location>
        <position position="198"/>
    </location>
    <ligand>
        <name>pyridoxal 5'-phosphate</name>
        <dbReference type="ChEBI" id="CHEBI:597326"/>
    </ligand>
</feature>
<feature type="binding site" evidence="1">
    <location>
        <begin position="240"/>
        <end position="241"/>
    </location>
    <ligand>
        <name>pyridoxal 5'-phosphate</name>
        <dbReference type="ChEBI" id="CHEBI:597326"/>
    </ligand>
</feature>
<feature type="modified residue" description="N6-(pyridoxal phosphate)lysine" evidence="1">
    <location>
        <position position="199"/>
    </location>
</feature>
<comment type="function">
    <text evidence="1">Catalyzes the reversible conversion of 3-phosphohydroxypyruvate to phosphoserine and of 3-hydroxy-2-oxo-4-phosphonooxybutanoate to phosphohydroxythreonine.</text>
</comment>
<comment type="catalytic activity">
    <reaction evidence="1">
        <text>O-phospho-L-serine + 2-oxoglutarate = 3-phosphooxypyruvate + L-glutamate</text>
        <dbReference type="Rhea" id="RHEA:14329"/>
        <dbReference type="ChEBI" id="CHEBI:16810"/>
        <dbReference type="ChEBI" id="CHEBI:18110"/>
        <dbReference type="ChEBI" id="CHEBI:29985"/>
        <dbReference type="ChEBI" id="CHEBI:57524"/>
        <dbReference type="EC" id="2.6.1.52"/>
    </reaction>
</comment>
<comment type="catalytic activity">
    <reaction evidence="1">
        <text>4-(phosphooxy)-L-threonine + 2-oxoglutarate = (R)-3-hydroxy-2-oxo-4-phosphooxybutanoate + L-glutamate</text>
        <dbReference type="Rhea" id="RHEA:16573"/>
        <dbReference type="ChEBI" id="CHEBI:16810"/>
        <dbReference type="ChEBI" id="CHEBI:29985"/>
        <dbReference type="ChEBI" id="CHEBI:58452"/>
        <dbReference type="ChEBI" id="CHEBI:58538"/>
        <dbReference type="EC" id="2.6.1.52"/>
    </reaction>
</comment>
<comment type="cofactor">
    <cofactor evidence="1">
        <name>pyridoxal 5'-phosphate</name>
        <dbReference type="ChEBI" id="CHEBI:597326"/>
    </cofactor>
    <text evidence="1">Binds 1 pyridoxal phosphate per subunit.</text>
</comment>
<comment type="pathway">
    <text evidence="1">Amino-acid biosynthesis; L-serine biosynthesis; L-serine from 3-phospho-D-glycerate: step 2/3.</text>
</comment>
<comment type="pathway">
    <text evidence="1">Cofactor biosynthesis; pyridoxine 5'-phosphate biosynthesis; pyridoxine 5'-phosphate from D-erythrose 4-phosphate: step 3/5.</text>
</comment>
<comment type="subunit">
    <text evidence="1">Homodimer.</text>
</comment>
<comment type="subcellular location">
    <subcellularLocation>
        <location evidence="1">Cytoplasm</location>
    </subcellularLocation>
</comment>
<comment type="similarity">
    <text evidence="1">Belongs to the class-V pyridoxal-phosphate-dependent aminotransferase family. SerC subfamily.</text>
</comment>
<accession>B8EA90</accession>
<proteinExistence type="inferred from homology"/>
<evidence type="ECO:0000255" key="1">
    <source>
        <dbReference type="HAMAP-Rule" id="MF_00160"/>
    </source>
</evidence>
<name>SERC_SHEB2</name>
<keyword id="KW-0028">Amino-acid biosynthesis</keyword>
<keyword id="KW-0032">Aminotransferase</keyword>
<keyword id="KW-0963">Cytoplasm</keyword>
<keyword id="KW-0663">Pyridoxal phosphate</keyword>
<keyword id="KW-0664">Pyridoxine biosynthesis</keyword>
<keyword id="KW-0718">Serine biosynthesis</keyword>
<keyword id="KW-0808">Transferase</keyword>
<reference key="1">
    <citation type="submission" date="2008-12" db="EMBL/GenBank/DDBJ databases">
        <title>Complete sequence of chromosome of Shewanella baltica OS223.</title>
        <authorList>
            <consortium name="US DOE Joint Genome Institute"/>
            <person name="Lucas S."/>
            <person name="Copeland A."/>
            <person name="Lapidus A."/>
            <person name="Glavina del Rio T."/>
            <person name="Dalin E."/>
            <person name="Tice H."/>
            <person name="Bruce D."/>
            <person name="Goodwin L."/>
            <person name="Pitluck S."/>
            <person name="Chertkov O."/>
            <person name="Meincke L."/>
            <person name="Brettin T."/>
            <person name="Detter J.C."/>
            <person name="Han C."/>
            <person name="Kuske C.R."/>
            <person name="Larimer F."/>
            <person name="Land M."/>
            <person name="Hauser L."/>
            <person name="Kyrpides N."/>
            <person name="Ovchinnikova G."/>
            <person name="Brettar I."/>
            <person name="Rodrigues J."/>
            <person name="Konstantinidis K."/>
            <person name="Tiedje J."/>
        </authorList>
    </citation>
    <scope>NUCLEOTIDE SEQUENCE [LARGE SCALE GENOMIC DNA]</scope>
    <source>
        <strain>OS223</strain>
    </source>
</reference>
<gene>
    <name evidence="1" type="primary">serC</name>
    <name type="ordered locus">Sbal223_2059</name>
</gene>
<organism>
    <name type="scientific">Shewanella baltica (strain OS223)</name>
    <dbReference type="NCBI Taxonomy" id="407976"/>
    <lineage>
        <taxon>Bacteria</taxon>
        <taxon>Pseudomonadati</taxon>
        <taxon>Pseudomonadota</taxon>
        <taxon>Gammaproteobacteria</taxon>
        <taxon>Alteromonadales</taxon>
        <taxon>Shewanellaceae</taxon>
        <taxon>Shewanella</taxon>
    </lineage>
</organism>
<dbReference type="EC" id="2.6.1.52" evidence="1"/>
<dbReference type="EMBL" id="CP001252">
    <property type="protein sequence ID" value="ACK46563.1"/>
    <property type="molecule type" value="Genomic_DNA"/>
</dbReference>
<dbReference type="RefSeq" id="WP_012587590.1">
    <property type="nucleotide sequence ID" value="NC_011663.1"/>
</dbReference>
<dbReference type="SMR" id="B8EA90"/>
<dbReference type="KEGG" id="sbp:Sbal223_2059"/>
<dbReference type="HOGENOM" id="CLU_034866_0_2_6"/>
<dbReference type="UniPathway" id="UPA00135">
    <property type="reaction ID" value="UER00197"/>
</dbReference>
<dbReference type="UniPathway" id="UPA00244">
    <property type="reaction ID" value="UER00311"/>
</dbReference>
<dbReference type="Proteomes" id="UP000002507">
    <property type="component" value="Chromosome"/>
</dbReference>
<dbReference type="GO" id="GO:0005737">
    <property type="term" value="C:cytoplasm"/>
    <property type="evidence" value="ECO:0007669"/>
    <property type="project" value="UniProtKB-SubCell"/>
</dbReference>
<dbReference type="GO" id="GO:0004648">
    <property type="term" value="F:O-phospho-L-serine:2-oxoglutarate aminotransferase activity"/>
    <property type="evidence" value="ECO:0007669"/>
    <property type="project" value="UniProtKB-UniRule"/>
</dbReference>
<dbReference type="GO" id="GO:0030170">
    <property type="term" value="F:pyridoxal phosphate binding"/>
    <property type="evidence" value="ECO:0007669"/>
    <property type="project" value="UniProtKB-UniRule"/>
</dbReference>
<dbReference type="GO" id="GO:0006564">
    <property type="term" value="P:L-serine biosynthetic process"/>
    <property type="evidence" value="ECO:0007669"/>
    <property type="project" value="UniProtKB-UniRule"/>
</dbReference>
<dbReference type="GO" id="GO:0008615">
    <property type="term" value="P:pyridoxine biosynthetic process"/>
    <property type="evidence" value="ECO:0007669"/>
    <property type="project" value="UniProtKB-UniRule"/>
</dbReference>
<dbReference type="FunFam" id="3.40.640.10:FF:000010">
    <property type="entry name" value="Phosphoserine aminotransferase"/>
    <property type="match status" value="1"/>
</dbReference>
<dbReference type="FunFam" id="3.90.1150.10:FF:000006">
    <property type="entry name" value="Phosphoserine aminotransferase"/>
    <property type="match status" value="1"/>
</dbReference>
<dbReference type="Gene3D" id="3.90.1150.10">
    <property type="entry name" value="Aspartate Aminotransferase, domain 1"/>
    <property type="match status" value="1"/>
</dbReference>
<dbReference type="Gene3D" id="3.40.640.10">
    <property type="entry name" value="Type I PLP-dependent aspartate aminotransferase-like (Major domain)"/>
    <property type="match status" value="1"/>
</dbReference>
<dbReference type="HAMAP" id="MF_00160">
    <property type="entry name" value="SerC_aminotrans_5"/>
    <property type="match status" value="1"/>
</dbReference>
<dbReference type="InterPro" id="IPR000192">
    <property type="entry name" value="Aminotrans_V_dom"/>
</dbReference>
<dbReference type="InterPro" id="IPR020578">
    <property type="entry name" value="Aminotrans_V_PyrdxlP_BS"/>
</dbReference>
<dbReference type="InterPro" id="IPR022278">
    <property type="entry name" value="Pser_aminoTfrase"/>
</dbReference>
<dbReference type="InterPro" id="IPR015424">
    <property type="entry name" value="PyrdxlP-dep_Trfase"/>
</dbReference>
<dbReference type="InterPro" id="IPR015421">
    <property type="entry name" value="PyrdxlP-dep_Trfase_major"/>
</dbReference>
<dbReference type="InterPro" id="IPR015422">
    <property type="entry name" value="PyrdxlP-dep_Trfase_small"/>
</dbReference>
<dbReference type="NCBIfam" id="NF003764">
    <property type="entry name" value="PRK05355.1"/>
    <property type="match status" value="1"/>
</dbReference>
<dbReference type="NCBIfam" id="TIGR01364">
    <property type="entry name" value="serC_1"/>
    <property type="match status" value="1"/>
</dbReference>
<dbReference type="PANTHER" id="PTHR43247">
    <property type="entry name" value="PHOSPHOSERINE AMINOTRANSFERASE"/>
    <property type="match status" value="1"/>
</dbReference>
<dbReference type="PANTHER" id="PTHR43247:SF1">
    <property type="entry name" value="PHOSPHOSERINE AMINOTRANSFERASE"/>
    <property type="match status" value="1"/>
</dbReference>
<dbReference type="Pfam" id="PF00266">
    <property type="entry name" value="Aminotran_5"/>
    <property type="match status" value="1"/>
</dbReference>
<dbReference type="PIRSF" id="PIRSF000525">
    <property type="entry name" value="SerC"/>
    <property type="match status" value="1"/>
</dbReference>
<dbReference type="SUPFAM" id="SSF53383">
    <property type="entry name" value="PLP-dependent transferases"/>
    <property type="match status" value="1"/>
</dbReference>
<dbReference type="PROSITE" id="PS00595">
    <property type="entry name" value="AA_TRANSFER_CLASS_5"/>
    <property type="match status" value="1"/>
</dbReference>
<protein>
    <recommendedName>
        <fullName evidence="1">Phosphoserine aminotransferase</fullName>
        <ecNumber evidence="1">2.6.1.52</ecNumber>
    </recommendedName>
    <alternativeName>
        <fullName evidence="1">Phosphohydroxythreonine aminotransferase</fullName>
        <shortName evidence="1">PSAT</shortName>
    </alternativeName>
</protein>
<sequence>MSAIYNFCAGPAMLPAAVMKKAQQELLDWNGQGVSVMEISHRSKEFIALTEQAESDLRELMQIPANYHVLFMHGGGRGQFSAVVNNFLGEQGKALYLVSGQWSSAALVEAQKLAGEAQIDSLNIVEKHNGLNAVVLPDLHKIDADYRYVHYCPNETVDGIEIFDELDSPWPIVADLSSTIMSREIDVSRYGLIYAGAQKNIGPSGLSIVIVRDDMLKLPSLPQSSIMDYRLAVEHDSMFNTPPTFAWYLAAEVFAWLRSTGGISSIAKINQQKAQMLYQCIDGNAFYRNGVVAANRSQMNVTFQLVNEALDSEFLKQAQIAGLVALKGHRIVGGMRASLYNAMPLDGVIALVKFMNEFAAKHS</sequence>